<sequence>MANLRKTHPLLKIANDALVDLPAPSNISVWWNFGSLLGLCLAAQILTGLFLAMHYTSDIATAFSSVAHICRDVNYGWLIRSMHANGASFFFICIYLHIGRGLYYGSYLYKETWNIGVILLLLVMMTAFVGYVLPWGQMSFWGATVITNLLSAVPYIGNSLVQWIWGGFSVDNATLTRFFAFHFLFPFVIAAMTMIHLIFLHETGSTNPTGLNSDADKISFHPYFSYKDLLGFAILLIALITLALFSPNLLGDPDNFTPANPLVTPPHIKPEWYFLFAYAILRSIPNKLGGVLALLFSILILMLVPVLHTSKQRALTFRPFSQFLFWLLVANVAILTWIGGMPVEHPFIIIGQIASFLYFFIFLILVPTTGLLENKMLEWQ</sequence>
<name>CYB_ASTOC</name>
<accession>Q9T9J5</accession>
<evidence type="ECO:0000250" key="1"/>
<evidence type="ECO:0000250" key="2">
    <source>
        <dbReference type="UniProtKB" id="P00157"/>
    </source>
</evidence>
<evidence type="ECO:0000255" key="3">
    <source>
        <dbReference type="PROSITE-ProRule" id="PRU00967"/>
    </source>
</evidence>
<evidence type="ECO:0000255" key="4">
    <source>
        <dbReference type="PROSITE-ProRule" id="PRU00968"/>
    </source>
</evidence>
<reference key="1">
    <citation type="book" date="1999" name="The biology of biodiversity">
        <title>Mitochondrial molecular clocks and the origin of euteleostean biodiversity: familial radiation of perciforms may have predated the Cretaceous/Tertiary boundary.</title>
        <editorList>
            <person name="Kato M."/>
        </editorList>
        <authorList>
            <person name="Kumazawa Y."/>
            <person name="Yamaguchi M."/>
            <person name="Nishida M."/>
        </authorList>
    </citation>
    <scope>NUCLEOTIDE SEQUENCE [GENOMIC DNA]</scope>
</reference>
<gene>
    <name type="primary">mt-cyb</name>
    <name type="synonym">cob</name>
    <name type="synonym">cytb</name>
    <name type="synonym">mtcyb</name>
</gene>
<feature type="chain" id="PRO_0000060648" description="Cytochrome b">
    <location>
        <begin position="1"/>
        <end position="380"/>
    </location>
</feature>
<feature type="transmembrane region" description="Helical" evidence="2">
    <location>
        <begin position="33"/>
        <end position="53"/>
    </location>
</feature>
<feature type="transmembrane region" description="Helical" evidence="2">
    <location>
        <begin position="77"/>
        <end position="98"/>
    </location>
</feature>
<feature type="transmembrane region" description="Helical" evidence="2">
    <location>
        <begin position="113"/>
        <end position="133"/>
    </location>
</feature>
<feature type="transmembrane region" description="Helical" evidence="2">
    <location>
        <begin position="178"/>
        <end position="198"/>
    </location>
</feature>
<feature type="transmembrane region" description="Helical" evidence="2">
    <location>
        <begin position="226"/>
        <end position="246"/>
    </location>
</feature>
<feature type="transmembrane region" description="Helical" evidence="2">
    <location>
        <begin position="288"/>
        <end position="308"/>
    </location>
</feature>
<feature type="transmembrane region" description="Helical" evidence="2">
    <location>
        <begin position="320"/>
        <end position="340"/>
    </location>
</feature>
<feature type="transmembrane region" description="Helical" evidence="2">
    <location>
        <begin position="347"/>
        <end position="367"/>
    </location>
</feature>
<feature type="binding site" description="axial binding residue" evidence="2">
    <location>
        <position position="83"/>
    </location>
    <ligand>
        <name>heme b</name>
        <dbReference type="ChEBI" id="CHEBI:60344"/>
        <label>b562</label>
    </ligand>
    <ligandPart>
        <name>Fe</name>
        <dbReference type="ChEBI" id="CHEBI:18248"/>
    </ligandPart>
</feature>
<feature type="binding site" description="axial binding residue" evidence="2">
    <location>
        <position position="97"/>
    </location>
    <ligand>
        <name>heme b</name>
        <dbReference type="ChEBI" id="CHEBI:60344"/>
        <label>b566</label>
    </ligand>
    <ligandPart>
        <name>Fe</name>
        <dbReference type="ChEBI" id="CHEBI:18248"/>
    </ligandPart>
</feature>
<feature type="binding site" description="axial binding residue" evidence="2">
    <location>
        <position position="182"/>
    </location>
    <ligand>
        <name>heme b</name>
        <dbReference type="ChEBI" id="CHEBI:60344"/>
        <label>b562</label>
    </ligand>
    <ligandPart>
        <name>Fe</name>
        <dbReference type="ChEBI" id="CHEBI:18248"/>
    </ligandPart>
</feature>
<feature type="binding site" description="axial binding residue" evidence="2">
    <location>
        <position position="196"/>
    </location>
    <ligand>
        <name>heme b</name>
        <dbReference type="ChEBI" id="CHEBI:60344"/>
        <label>b566</label>
    </ligand>
    <ligandPart>
        <name>Fe</name>
        <dbReference type="ChEBI" id="CHEBI:18248"/>
    </ligandPart>
</feature>
<feature type="binding site" evidence="2">
    <location>
        <position position="201"/>
    </location>
    <ligand>
        <name>a ubiquinone</name>
        <dbReference type="ChEBI" id="CHEBI:16389"/>
    </ligand>
</feature>
<comment type="function">
    <text evidence="2">Component of the ubiquinol-cytochrome c reductase complex (complex III or cytochrome b-c1 complex) that is part of the mitochondrial respiratory chain. The b-c1 complex mediates electron transfer from ubiquinol to cytochrome c. Contributes to the generation of a proton gradient across the mitochondrial membrane that is then used for ATP synthesis.</text>
</comment>
<comment type="cofactor">
    <cofactor evidence="2">
        <name>heme b</name>
        <dbReference type="ChEBI" id="CHEBI:60344"/>
    </cofactor>
    <text evidence="2">Binds 2 heme b groups non-covalently.</text>
</comment>
<comment type="subunit">
    <text evidence="2">The cytochrome bc1 complex contains 3 respiratory subunits (MT-CYB, CYC1 and UQCRFS1), 2 core proteins (UQCRC1 and UQCRC2) and probably 6 low-molecular weight proteins.</text>
</comment>
<comment type="subcellular location">
    <subcellularLocation>
        <location evidence="2">Mitochondrion inner membrane</location>
        <topology evidence="2">Multi-pass membrane protein</topology>
    </subcellularLocation>
</comment>
<comment type="miscellaneous">
    <text evidence="1">Heme 1 (or BL or b562) is low-potential and absorbs at about 562 nm, and heme 2 (or BH or b566) is high-potential and absorbs at about 566 nm.</text>
</comment>
<comment type="similarity">
    <text evidence="3 4">Belongs to the cytochrome b family.</text>
</comment>
<comment type="caution">
    <text evidence="2">The full-length protein contains only eight transmembrane helices, not nine as predicted by bioinformatics tools.</text>
</comment>
<organism>
    <name type="scientific">Astronotus ocellatus</name>
    <name type="common">Oscar</name>
    <name type="synonym">Lobotes ocellatus</name>
    <dbReference type="NCBI Taxonomy" id="50733"/>
    <lineage>
        <taxon>Eukaryota</taxon>
        <taxon>Metazoa</taxon>
        <taxon>Chordata</taxon>
        <taxon>Craniata</taxon>
        <taxon>Vertebrata</taxon>
        <taxon>Euteleostomi</taxon>
        <taxon>Actinopterygii</taxon>
        <taxon>Neopterygii</taxon>
        <taxon>Teleostei</taxon>
        <taxon>Neoteleostei</taxon>
        <taxon>Acanthomorphata</taxon>
        <taxon>Ovalentaria</taxon>
        <taxon>Cichlomorphae</taxon>
        <taxon>Cichliformes</taxon>
        <taxon>Cichlidae</taxon>
        <taxon>New World cichlids</taxon>
        <taxon>Astronotinae</taxon>
        <taxon>Astronotini</taxon>
        <taxon>Astronotus</taxon>
    </lineage>
</organism>
<keyword id="KW-0249">Electron transport</keyword>
<keyword id="KW-0349">Heme</keyword>
<keyword id="KW-0408">Iron</keyword>
<keyword id="KW-0472">Membrane</keyword>
<keyword id="KW-0479">Metal-binding</keyword>
<keyword id="KW-0496">Mitochondrion</keyword>
<keyword id="KW-0999">Mitochondrion inner membrane</keyword>
<keyword id="KW-0679">Respiratory chain</keyword>
<keyword id="KW-0812">Transmembrane</keyword>
<keyword id="KW-1133">Transmembrane helix</keyword>
<keyword id="KW-0813">Transport</keyword>
<keyword id="KW-0830">Ubiquinone</keyword>
<protein>
    <recommendedName>
        <fullName>Cytochrome b</fullName>
    </recommendedName>
    <alternativeName>
        <fullName>Complex III subunit 3</fullName>
    </alternativeName>
    <alternativeName>
        <fullName>Complex III subunit III</fullName>
    </alternativeName>
    <alternativeName>
        <fullName>Cytochrome b-c1 complex subunit 3</fullName>
    </alternativeName>
    <alternativeName>
        <fullName>Ubiquinol-cytochrome-c reductase complex cytochrome b subunit</fullName>
    </alternativeName>
</protein>
<dbReference type="EMBL" id="AB018987">
    <property type="protein sequence ID" value="BAA88865.1"/>
    <property type="molecule type" value="Genomic_DNA"/>
</dbReference>
<dbReference type="RefSeq" id="YP_001054788.1">
    <property type="nucleotide sequence ID" value="NC_009058.1"/>
</dbReference>
<dbReference type="SMR" id="Q9T9J5"/>
<dbReference type="GeneID" id="4850637"/>
<dbReference type="CTD" id="4519"/>
<dbReference type="GO" id="GO:0005743">
    <property type="term" value="C:mitochondrial inner membrane"/>
    <property type="evidence" value="ECO:0007669"/>
    <property type="project" value="UniProtKB-SubCell"/>
</dbReference>
<dbReference type="GO" id="GO:0045275">
    <property type="term" value="C:respiratory chain complex III"/>
    <property type="evidence" value="ECO:0007669"/>
    <property type="project" value="InterPro"/>
</dbReference>
<dbReference type="GO" id="GO:0046872">
    <property type="term" value="F:metal ion binding"/>
    <property type="evidence" value="ECO:0007669"/>
    <property type="project" value="UniProtKB-KW"/>
</dbReference>
<dbReference type="GO" id="GO:0008121">
    <property type="term" value="F:ubiquinol-cytochrome-c reductase activity"/>
    <property type="evidence" value="ECO:0007669"/>
    <property type="project" value="InterPro"/>
</dbReference>
<dbReference type="GO" id="GO:0006122">
    <property type="term" value="P:mitochondrial electron transport, ubiquinol to cytochrome c"/>
    <property type="evidence" value="ECO:0007669"/>
    <property type="project" value="TreeGrafter"/>
</dbReference>
<dbReference type="CDD" id="cd00290">
    <property type="entry name" value="cytochrome_b_C"/>
    <property type="match status" value="1"/>
</dbReference>
<dbReference type="CDD" id="cd00284">
    <property type="entry name" value="Cytochrome_b_N"/>
    <property type="match status" value="1"/>
</dbReference>
<dbReference type="FunFam" id="1.20.810.10:FF:000002">
    <property type="entry name" value="Cytochrome b"/>
    <property type="match status" value="1"/>
</dbReference>
<dbReference type="Gene3D" id="1.20.810.10">
    <property type="entry name" value="Cytochrome Bc1 Complex, Chain C"/>
    <property type="match status" value="1"/>
</dbReference>
<dbReference type="InterPro" id="IPR005798">
    <property type="entry name" value="Cyt_b/b6_C"/>
</dbReference>
<dbReference type="InterPro" id="IPR036150">
    <property type="entry name" value="Cyt_b/b6_C_sf"/>
</dbReference>
<dbReference type="InterPro" id="IPR005797">
    <property type="entry name" value="Cyt_b/b6_N"/>
</dbReference>
<dbReference type="InterPro" id="IPR027387">
    <property type="entry name" value="Cytb/b6-like_sf"/>
</dbReference>
<dbReference type="InterPro" id="IPR030689">
    <property type="entry name" value="Cytochrome_b"/>
</dbReference>
<dbReference type="InterPro" id="IPR048260">
    <property type="entry name" value="Cytochrome_b_C_euk/bac"/>
</dbReference>
<dbReference type="InterPro" id="IPR048259">
    <property type="entry name" value="Cytochrome_b_N_euk/bac"/>
</dbReference>
<dbReference type="InterPro" id="IPR016174">
    <property type="entry name" value="Di-haem_cyt_TM"/>
</dbReference>
<dbReference type="PANTHER" id="PTHR19271">
    <property type="entry name" value="CYTOCHROME B"/>
    <property type="match status" value="1"/>
</dbReference>
<dbReference type="PANTHER" id="PTHR19271:SF16">
    <property type="entry name" value="CYTOCHROME B"/>
    <property type="match status" value="1"/>
</dbReference>
<dbReference type="Pfam" id="PF00032">
    <property type="entry name" value="Cytochrom_B_C"/>
    <property type="match status" value="1"/>
</dbReference>
<dbReference type="Pfam" id="PF00033">
    <property type="entry name" value="Cytochrome_B"/>
    <property type="match status" value="1"/>
</dbReference>
<dbReference type="PIRSF" id="PIRSF038885">
    <property type="entry name" value="COB"/>
    <property type="match status" value="1"/>
</dbReference>
<dbReference type="SUPFAM" id="SSF81648">
    <property type="entry name" value="a domain/subunit of cytochrome bc1 complex (Ubiquinol-cytochrome c reductase)"/>
    <property type="match status" value="1"/>
</dbReference>
<dbReference type="SUPFAM" id="SSF81342">
    <property type="entry name" value="Transmembrane di-heme cytochromes"/>
    <property type="match status" value="1"/>
</dbReference>
<dbReference type="PROSITE" id="PS51003">
    <property type="entry name" value="CYTB_CTER"/>
    <property type="match status" value="1"/>
</dbReference>
<dbReference type="PROSITE" id="PS51002">
    <property type="entry name" value="CYTB_NTER"/>
    <property type="match status" value="1"/>
</dbReference>
<proteinExistence type="inferred from homology"/>
<geneLocation type="mitochondrion"/>